<sequence length="111" mass="12459">MAQIQFSRGVSEPVVPEVRLTRAKSGNSGTATFRFESPTILDAESTDDITGMYLVDEEGEIVTREVKGKFINGKPTSVEAILIMNSQDEWDRFMRFMERYAQENGLGFSKA</sequence>
<reference key="1">
    <citation type="journal article" date="2008" name="Proc. Natl. Acad. Sci. U.S.A.">
        <title>The genome of Cyanothece 51142, a unicellular diazotrophic cyanobacterium important in the marine nitrogen cycle.</title>
        <authorList>
            <person name="Welsh E.A."/>
            <person name="Liberton M."/>
            <person name="Stoeckel J."/>
            <person name="Loh T."/>
            <person name="Elvitigala T."/>
            <person name="Wang C."/>
            <person name="Wollam A."/>
            <person name="Fulton R.S."/>
            <person name="Clifton S.W."/>
            <person name="Jacobs J.M."/>
            <person name="Aurora R."/>
            <person name="Ghosh B.K."/>
            <person name="Sherman L.A."/>
            <person name="Smith R.D."/>
            <person name="Wilson R.K."/>
            <person name="Pakrasi H.B."/>
        </authorList>
    </citation>
    <scope>NUCLEOTIDE SEQUENCE [LARGE SCALE GENOMIC DNA]</scope>
    <source>
        <strain>ATCC 51142 / BH68</strain>
    </source>
</reference>
<protein>
    <recommendedName>
        <fullName evidence="1">Photosystem II reaction center Psb28 protein</fullName>
    </recommendedName>
    <alternativeName>
        <fullName evidence="1">Photosystem II 13 kDa protein</fullName>
    </alternativeName>
    <alternativeName>
        <fullName evidence="1">Photosystem II reaction center W protein</fullName>
    </alternativeName>
</protein>
<name>PSB28_CROS5</name>
<gene>
    <name evidence="1" type="primary">psb28</name>
    <name type="ordered locus">cce_1599</name>
</gene>
<proteinExistence type="inferred from homology"/>
<organism>
    <name type="scientific">Crocosphaera subtropica (strain ATCC 51142 / BH68)</name>
    <name type="common">Cyanothece sp. (strain ATCC 51142)</name>
    <dbReference type="NCBI Taxonomy" id="43989"/>
    <lineage>
        <taxon>Bacteria</taxon>
        <taxon>Bacillati</taxon>
        <taxon>Cyanobacteriota</taxon>
        <taxon>Cyanophyceae</taxon>
        <taxon>Oscillatoriophycideae</taxon>
        <taxon>Chroococcales</taxon>
        <taxon>Aphanothecaceae</taxon>
        <taxon>Crocosphaera</taxon>
        <taxon>Crocosphaera subtropica</taxon>
    </lineage>
</organism>
<evidence type="ECO:0000255" key="1">
    <source>
        <dbReference type="HAMAP-Rule" id="MF_01370"/>
    </source>
</evidence>
<feature type="chain" id="PRO_1000184116" description="Photosystem II reaction center Psb28 protein">
    <location>
        <begin position="1"/>
        <end position="111"/>
    </location>
</feature>
<keyword id="KW-0472">Membrane</keyword>
<keyword id="KW-0602">Photosynthesis</keyword>
<keyword id="KW-0604">Photosystem II</keyword>
<keyword id="KW-1185">Reference proteome</keyword>
<keyword id="KW-0793">Thylakoid</keyword>
<accession>B1WXW2</accession>
<dbReference type="EMBL" id="CP000806">
    <property type="protein sequence ID" value="ACB50949.1"/>
    <property type="molecule type" value="Genomic_DNA"/>
</dbReference>
<dbReference type="RefSeq" id="WP_008274784.1">
    <property type="nucleotide sequence ID" value="NC_010546.1"/>
</dbReference>
<dbReference type="SMR" id="B1WXW2"/>
<dbReference type="STRING" id="43989.cce_1599"/>
<dbReference type="KEGG" id="cyt:cce_1599"/>
<dbReference type="eggNOG" id="ENOG5031GDS">
    <property type="taxonomic scope" value="Bacteria"/>
</dbReference>
<dbReference type="HOGENOM" id="CLU_137323_1_0_3"/>
<dbReference type="OrthoDB" id="559598at2"/>
<dbReference type="Proteomes" id="UP000001203">
    <property type="component" value="Chromosome circular"/>
</dbReference>
<dbReference type="GO" id="GO:0009654">
    <property type="term" value="C:photosystem II oxygen evolving complex"/>
    <property type="evidence" value="ECO:0007669"/>
    <property type="project" value="InterPro"/>
</dbReference>
<dbReference type="GO" id="GO:0031676">
    <property type="term" value="C:plasma membrane-derived thylakoid membrane"/>
    <property type="evidence" value="ECO:0007669"/>
    <property type="project" value="UniProtKB-SubCell"/>
</dbReference>
<dbReference type="GO" id="GO:0015979">
    <property type="term" value="P:photosynthesis"/>
    <property type="evidence" value="ECO:0007669"/>
    <property type="project" value="UniProtKB-UniRule"/>
</dbReference>
<dbReference type="Gene3D" id="2.40.30.220">
    <property type="entry name" value="Photosystem II Psb28"/>
    <property type="match status" value="1"/>
</dbReference>
<dbReference type="HAMAP" id="MF_01370">
    <property type="entry name" value="PSII_Psb28"/>
    <property type="match status" value="1"/>
</dbReference>
<dbReference type="InterPro" id="IPR038676">
    <property type="entry name" value="Psb28_c1_sf"/>
</dbReference>
<dbReference type="InterPro" id="IPR005610">
    <property type="entry name" value="PSII_Psb28_class-1"/>
</dbReference>
<dbReference type="NCBIfam" id="TIGR03047">
    <property type="entry name" value="PS_II_psb28"/>
    <property type="match status" value="1"/>
</dbReference>
<dbReference type="PANTHER" id="PTHR34963">
    <property type="match status" value="1"/>
</dbReference>
<dbReference type="PANTHER" id="PTHR34963:SF2">
    <property type="entry name" value="PHOTOSYSTEM II REACTION CENTER PSB28 PROTEIN, CHLOROPLASTIC"/>
    <property type="match status" value="1"/>
</dbReference>
<dbReference type="Pfam" id="PF03912">
    <property type="entry name" value="Psb28"/>
    <property type="match status" value="1"/>
</dbReference>
<comment type="subunit">
    <text evidence="1">Part of the photosystem II complex.</text>
</comment>
<comment type="subcellular location">
    <subcellularLocation>
        <location evidence="1">Cellular thylakoid membrane</location>
        <topology evidence="1">Peripheral membrane protein</topology>
        <orientation evidence="1">Cytoplasmic side</orientation>
    </subcellularLocation>
</comment>
<comment type="similarity">
    <text evidence="1">Belongs to the Psb28 family.</text>
</comment>